<reference key="1">
    <citation type="submission" date="2007-02" db="EMBL/GenBank/DDBJ databases">
        <title>Complete sequence of Clostridium thermocellum ATCC 27405.</title>
        <authorList>
            <consortium name="US DOE Joint Genome Institute"/>
            <person name="Copeland A."/>
            <person name="Lucas S."/>
            <person name="Lapidus A."/>
            <person name="Barry K."/>
            <person name="Detter J.C."/>
            <person name="Glavina del Rio T."/>
            <person name="Hammon N."/>
            <person name="Israni S."/>
            <person name="Dalin E."/>
            <person name="Tice H."/>
            <person name="Pitluck S."/>
            <person name="Chertkov O."/>
            <person name="Brettin T."/>
            <person name="Bruce D."/>
            <person name="Han C."/>
            <person name="Tapia R."/>
            <person name="Gilna P."/>
            <person name="Schmutz J."/>
            <person name="Larimer F."/>
            <person name="Land M."/>
            <person name="Hauser L."/>
            <person name="Kyrpides N."/>
            <person name="Mikhailova N."/>
            <person name="Wu J.H.D."/>
            <person name="Newcomb M."/>
            <person name="Richardson P."/>
        </authorList>
    </citation>
    <scope>NUCLEOTIDE SEQUENCE [LARGE SCALE GENOMIC DNA]</scope>
    <source>
        <strain>ATCC 27405 / DSM 1237 / JCM 9322 / NBRC 103400 / NCIMB 10682 / NRRL B-4536 / VPI 7372</strain>
    </source>
</reference>
<accession>A3DCG9</accession>
<name>Y410_ACET2</name>
<gene>
    <name type="ordered locus">Cthe_0410</name>
</gene>
<protein>
    <recommendedName>
        <fullName evidence="1">UPF0210 protein Cthe_0410</fullName>
    </recommendedName>
</protein>
<feature type="chain" id="PRO_1000073149" description="UPF0210 protein Cthe_0410">
    <location>
        <begin position="1"/>
        <end position="452"/>
    </location>
</feature>
<keyword id="KW-1185">Reference proteome</keyword>
<comment type="subunit">
    <text evidence="1">Homodimer.</text>
</comment>
<comment type="similarity">
    <text evidence="1">Belongs to the UPF0210 family.</text>
</comment>
<proteinExistence type="inferred from homology"/>
<sequence length="452" mass="47347">MLMPFEIMETIKMIQEENLDIRTITMGISLRDCASSNSKETRDKIYNKITRLAANLVKVGEDIEKEFGIPIVNKRISVTPISLVAESSDEENYIKFAETLDKAADAVGVNFIGGFSALVQKGYTIGDRRLIASIPEALSSTKKVCSSVNVASTKAGINMDAVREMGHVIKKAAELSADSGGLACAKLVVFANVPEDNPFMAGAFHGVGEPECVINVGVSGPGVVKSALEKVRGADFETVSETIKKTAFKITRMGQLVAREASRRLGVAFGIVDLSLAPTPTIGDSVAHILEEMGLEKCGTHGTTAALALLNDAVKKGGTMASSSVGGLSGAFIPVSEDAGMIDAVKAGALSIEKLEAMTCVCSVGLDMIVVPGDTSEETISAIIADEAAIGVINNKTTAVRIIPAPGKKVGDIVEFGGLLGSGPVMKVSNFSSRDFINRGGRIPAPLNSLRN</sequence>
<organism>
    <name type="scientific">Acetivibrio thermocellus (strain ATCC 27405 / DSM 1237 / JCM 9322 / NBRC 103400 / NCIMB 10682 / NRRL B-4536 / VPI 7372)</name>
    <name type="common">Clostridium thermocellum</name>
    <dbReference type="NCBI Taxonomy" id="203119"/>
    <lineage>
        <taxon>Bacteria</taxon>
        <taxon>Bacillati</taxon>
        <taxon>Bacillota</taxon>
        <taxon>Clostridia</taxon>
        <taxon>Eubacteriales</taxon>
        <taxon>Oscillospiraceae</taxon>
        <taxon>Acetivibrio</taxon>
    </lineage>
</organism>
<evidence type="ECO:0000255" key="1">
    <source>
        <dbReference type="HAMAP-Rule" id="MF_01221"/>
    </source>
</evidence>
<dbReference type="EMBL" id="CP000568">
    <property type="protein sequence ID" value="ABN51648.1"/>
    <property type="molecule type" value="Genomic_DNA"/>
</dbReference>
<dbReference type="RefSeq" id="WP_003512715.1">
    <property type="nucleotide sequence ID" value="NC_009012.1"/>
</dbReference>
<dbReference type="SMR" id="A3DCG9"/>
<dbReference type="STRING" id="203119.Cthe_0410"/>
<dbReference type="GeneID" id="35804731"/>
<dbReference type="KEGG" id="cth:Cthe_0410"/>
<dbReference type="eggNOG" id="COG2848">
    <property type="taxonomic scope" value="Bacteria"/>
</dbReference>
<dbReference type="HOGENOM" id="CLU_048704_0_0_9"/>
<dbReference type="OrthoDB" id="9763001at2"/>
<dbReference type="Proteomes" id="UP000002145">
    <property type="component" value="Chromosome"/>
</dbReference>
<dbReference type="CDD" id="cd08025">
    <property type="entry name" value="RNR_PFL_like_DUF711"/>
    <property type="match status" value="1"/>
</dbReference>
<dbReference type="Gene3D" id="3.20.70.20">
    <property type="match status" value="1"/>
</dbReference>
<dbReference type="HAMAP" id="MF_01221">
    <property type="entry name" value="UPF0210"/>
    <property type="match status" value="1"/>
</dbReference>
<dbReference type="InterPro" id="IPR007841">
    <property type="entry name" value="UPF0210"/>
</dbReference>
<dbReference type="NCBIfam" id="NF003700">
    <property type="entry name" value="PRK05313.1"/>
    <property type="match status" value="1"/>
</dbReference>
<dbReference type="PANTHER" id="PTHR37560:SF1">
    <property type="entry name" value="UPF0210 PROTEIN MJ1665"/>
    <property type="match status" value="1"/>
</dbReference>
<dbReference type="PANTHER" id="PTHR37560">
    <property type="entry name" value="UPF0210 PROTEIN SPR0218"/>
    <property type="match status" value="1"/>
</dbReference>
<dbReference type="Pfam" id="PF05167">
    <property type="entry name" value="DUF711"/>
    <property type="match status" value="1"/>
</dbReference>
<dbReference type="SUPFAM" id="SSF51998">
    <property type="entry name" value="PFL-like glycyl radical enzymes"/>
    <property type="match status" value="1"/>
</dbReference>